<proteinExistence type="evidence at protein level"/>
<reference evidence="5" key="1">
    <citation type="journal article" date="2019" name="Nat. Ecol. Evol.">
        <title>Palaeoproteomics resolves sloth relationships.</title>
        <authorList>
            <person name="Presslee S."/>
            <person name="Slater G.J."/>
            <person name="Pujos F."/>
            <person name="Forasiepi A.M."/>
            <person name="Fischer R."/>
            <person name="Molloy K."/>
            <person name="Mackie M."/>
            <person name="Olsen J.V."/>
            <person name="Kramarz A."/>
            <person name="Taglioretti M."/>
            <person name="Scaglia F."/>
            <person name="Lezcano M."/>
            <person name="Lanata J.L."/>
            <person name="Southon J."/>
            <person name="Feranec R."/>
            <person name="Bloch J."/>
            <person name="Hajduk A."/>
            <person name="Martin F.M."/>
            <person name="Salas Gismondi R."/>
            <person name="Reguero M."/>
            <person name="de Muizon C."/>
            <person name="Greenwood A."/>
            <person name="Chait B.T."/>
            <person name="Penkman K."/>
            <person name="Collins M."/>
            <person name="MacPhee R.D.E."/>
        </authorList>
    </citation>
    <scope>PROTEIN SEQUENCE</scope>
    <scope>TISSUE SPECIFICITY</scope>
    <scope>IDENTIFICATION BY MASS SPECTROMETRY</scope>
    <source>
        <tissue evidence="4">Bone</tissue>
    </source>
</reference>
<comment type="function">
    <text evidence="5">Type I collagen is a member of group I collagen (fibrillar forming collagen).</text>
</comment>
<comment type="subunit">
    <text evidence="1">Trimers of one alpha 2(I) and two alpha 1(I) chains. Interacts (via C-terminus) with TMEM131 (via PapD-L domain); the interaction is direct and is involved in assembly and TRAPPIII ER-to-Golgi transport complex-dependent secretion of collagen.</text>
</comment>
<comment type="subcellular location">
    <subcellularLocation>
        <location>Secreted</location>
    </subcellularLocation>
    <subcellularLocation>
        <location>Secreted</location>
        <location>Extracellular space</location>
    </subcellularLocation>
    <subcellularLocation>
        <location evidence="5">Secreted</location>
        <location evidence="5">Extracellular space</location>
        <location evidence="5">Extracellular matrix</location>
    </subcellularLocation>
</comment>
<comment type="tissue specificity">
    <text evidence="3">Expressed in bones.</text>
</comment>
<comment type="PTM">
    <text evidence="1">Prolines at the third position of the tripeptide repeating unit (G-X-Y) are hydroxylated in some or all of the chains.</text>
</comment>
<comment type="miscellaneous">
    <text evidence="3">These protein fragments were extracted from an ancient femur bone collected in Buenos Aires in Argentina.</text>
</comment>
<comment type="similarity">
    <text evidence="5">Belongs to the fibrillar collagen family.</text>
</comment>
<accession>C0HLI0</accession>
<keyword id="KW-0903">Direct protein sequencing</keyword>
<keyword id="KW-0952">Extinct organism protein</keyword>
<keyword id="KW-0272">Extracellular matrix</keyword>
<keyword id="KW-0325">Glycoprotein</keyword>
<keyword id="KW-0379">Hydroxylation</keyword>
<keyword id="KW-0964">Secreted</keyword>
<feature type="chain" id="PRO_0000448465" description="Collagen alpha-2(I) chain">
    <location>
        <begin position="1"/>
        <end position="933"/>
    </location>
</feature>
<feature type="region of interest" description="Disordered" evidence="2">
    <location>
        <begin position="1"/>
        <end position="191"/>
    </location>
</feature>
<feature type="region of interest" description="Disordered" evidence="2">
    <location>
        <begin position="206"/>
        <end position="933"/>
    </location>
</feature>
<feature type="compositionally biased region" description="Gly residues" evidence="2">
    <location>
        <begin position="1"/>
        <end position="16"/>
    </location>
</feature>
<feature type="compositionally biased region" description="Low complexity" evidence="2">
    <location>
        <begin position="17"/>
        <end position="53"/>
    </location>
</feature>
<feature type="compositionally biased region" description="Basic and acidic residues" evidence="2">
    <location>
        <begin position="57"/>
        <end position="72"/>
    </location>
</feature>
<feature type="compositionally biased region" description="Low complexity" evidence="2">
    <location>
        <begin position="108"/>
        <end position="137"/>
    </location>
</feature>
<feature type="compositionally biased region" description="Low complexity" evidence="2">
    <location>
        <begin position="162"/>
        <end position="176"/>
    </location>
</feature>
<feature type="compositionally biased region" description="Low complexity" evidence="2">
    <location>
        <begin position="213"/>
        <end position="228"/>
    </location>
</feature>
<feature type="compositionally biased region" description="Gly residues" evidence="2">
    <location>
        <begin position="280"/>
        <end position="289"/>
    </location>
</feature>
<feature type="compositionally biased region" description="Gly residues" evidence="2">
    <location>
        <begin position="413"/>
        <end position="422"/>
    </location>
</feature>
<feature type="compositionally biased region" description="Low complexity" evidence="2">
    <location>
        <begin position="468"/>
        <end position="485"/>
    </location>
</feature>
<feature type="compositionally biased region" description="Low complexity" evidence="2">
    <location>
        <begin position="497"/>
        <end position="507"/>
    </location>
</feature>
<feature type="compositionally biased region" description="Gly residues" evidence="2">
    <location>
        <begin position="508"/>
        <end position="517"/>
    </location>
</feature>
<feature type="compositionally biased region" description="Low complexity" evidence="2">
    <location>
        <begin position="540"/>
        <end position="584"/>
    </location>
</feature>
<feature type="compositionally biased region" description="Low complexity" evidence="2">
    <location>
        <begin position="591"/>
        <end position="611"/>
    </location>
</feature>
<feature type="compositionally biased region" description="Low complexity" evidence="2">
    <location>
        <begin position="627"/>
        <end position="640"/>
    </location>
</feature>
<feature type="compositionally biased region" description="Gly residues" evidence="2">
    <location>
        <begin position="644"/>
        <end position="656"/>
    </location>
</feature>
<feature type="compositionally biased region" description="Low complexity" evidence="2">
    <location>
        <begin position="657"/>
        <end position="667"/>
    </location>
</feature>
<feature type="compositionally biased region" description="Gly residues" evidence="2">
    <location>
        <begin position="704"/>
        <end position="713"/>
    </location>
</feature>
<feature type="compositionally biased region" description="Low complexity" evidence="2">
    <location>
        <begin position="721"/>
        <end position="748"/>
    </location>
</feature>
<feature type="compositionally biased region" description="Low complexity" evidence="2">
    <location>
        <begin position="756"/>
        <end position="781"/>
    </location>
</feature>
<feature type="compositionally biased region" description="Basic and acidic residues" evidence="2">
    <location>
        <begin position="795"/>
        <end position="807"/>
    </location>
</feature>
<feature type="compositionally biased region" description="Low complexity" evidence="2">
    <location>
        <begin position="809"/>
        <end position="831"/>
    </location>
</feature>
<feature type="compositionally biased region" description="Low complexity" evidence="2">
    <location>
        <begin position="840"/>
        <end position="860"/>
    </location>
</feature>
<feature type="compositionally biased region" description="Basic and acidic residues" evidence="2">
    <location>
        <begin position="864"/>
        <end position="874"/>
    </location>
</feature>
<feature type="modified residue" description="4-hydroxyproline" evidence="1">
    <location>
        <position position="24"/>
    </location>
</feature>
<feature type="modified residue" description="4-hydroxyproline" evidence="1">
    <location>
        <position position="30"/>
    </location>
</feature>
<feature type="modified residue" description="5-hydroxylysine; alternate" evidence="1">
    <location>
        <position position="94"/>
    </location>
</feature>
<feature type="modified residue" description="4-hydroxyproline" evidence="1">
    <location>
        <position position="317"/>
    </location>
</feature>
<feature type="modified residue" description="4-hydroxyproline" evidence="1">
    <location>
        <position position="320"/>
    </location>
</feature>
<feature type="glycosylation site" description="O-linked (Gal...) hydroxylysine; alternate" evidence="1">
    <location>
        <position position="94"/>
    </location>
</feature>
<feature type="unsure residue" description="L or I" evidence="4">
    <location>
        <position position="10"/>
    </location>
</feature>
<feature type="unsure residue" description="L or I" evidence="4">
    <location>
        <position position="17"/>
    </location>
</feature>
<feature type="unsure residue" description="L or I" evidence="4">
    <location>
        <position position="90"/>
    </location>
</feature>
<feature type="unsure residue" description="L or I" evidence="4">
    <location>
        <position position="101"/>
    </location>
</feature>
<feature type="unsure residue" description="L or I" evidence="4">
    <location>
        <position position="150"/>
    </location>
</feature>
<feature type="unsure residue" description="L or I" evidence="4">
    <location>
        <position position="170"/>
    </location>
</feature>
<feature type="unsure residue" description="L or I" evidence="4">
    <location>
        <position position="188"/>
    </location>
</feature>
<feature type="unsure residue" description="L or I" evidence="4">
    <location>
        <position position="197"/>
    </location>
</feature>
<feature type="unsure residue" description="L or I" evidence="4">
    <location>
        <position position="206"/>
    </location>
</feature>
<feature type="unsure residue" description="L or I" evidence="4">
    <location>
        <position position="227"/>
    </location>
</feature>
<feature type="unsure residue" description="L or I" evidence="4">
    <location>
        <position position="281"/>
    </location>
</feature>
<feature type="unsure residue" description="L or I" evidence="4">
    <location>
        <position position="290"/>
    </location>
</feature>
<feature type="unsure residue" description="L or I" evidence="4">
    <location>
        <position position="322"/>
    </location>
</feature>
<feature type="unsure residue" description="L or I" evidence="4">
    <location>
        <position position="328"/>
    </location>
</feature>
<feature type="unsure residue" description="L or I" evidence="4">
    <location>
        <position position="346"/>
    </location>
</feature>
<feature type="unsure residue" description="L or I" evidence="4">
    <location>
        <position position="390"/>
    </location>
</feature>
<feature type="unsure residue" description="L or I" evidence="4">
    <location>
        <position position="411"/>
    </location>
</feature>
<feature type="unsure residue" description="L or I" evidence="4">
    <location>
        <position position="432"/>
    </location>
</feature>
<feature type="unsure residue" description="L or I" evidence="4">
    <location>
        <position position="455"/>
    </location>
</feature>
<feature type="unsure residue" description="L or I" evidence="4">
    <location>
        <position position="515"/>
    </location>
</feature>
<feature type="unsure residue" description="L or I" evidence="4">
    <location>
        <position position="536"/>
    </location>
</feature>
<feature type="unsure residue" description="L or I" evidence="4">
    <location>
        <position position="657"/>
    </location>
</feature>
<feature type="unsure residue" description="L or I" evidence="4">
    <location>
        <position position="690"/>
    </location>
</feature>
<feature type="unsure residue" description="L or I" evidence="4">
    <location>
        <position position="738"/>
    </location>
</feature>
<feature type="unsure residue" description="L or I" evidence="4">
    <location>
        <position position="739"/>
    </location>
</feature>
<feature type="unsure residue" description="L or I" evidence="4">
    <location>
        <position position="745"/>
    </location>
</feature>
<feature type="unsure residue" description="L or I" evidence="4">
    <location>
        <position position="747"/>
    </location>
</feature>
<feature type="unsure residue" description="L or I" evidence="4">
    <location>
        <position position="756"/>
    </location>
</feature>
<feature type="unsure residue" description="L or I" evidence="4">
    <location>
        <position position="769"/>
    </location>
</feature>
<feature type="unsure residue" description="L or I" evidence="4">
    <location>
        <position position="800"/>
    </location>
</feature>
<feature type="unsure residue" description="L or I" evidence="4">
    <location>
        <position position="877"/>
    </location>
</feature>
<feature type="unsure residue" description="L or I" evidence="4">
    <location>
        <position position="881"/>
    </location>
</feature>
<feature type="unsure residue" description="L or I" evidence="4">
    <location>
        <position position="884"/>
    </location>
</feature>
<feature type="unsure residue" description="L or I" evidence="4">
    <location>
        <position position="887"/>
    </location>
</feature>
<feature type="non-consecutive residues" evidence="4">
    <location>
        <begin position="6"/>
        <end position="7"/>
    </location>
</feature>
<feature type="non-consecutive residues" evidence="4">
    <location>
        <begin position="54"/>
        <end position="55"/>
    </location>
</feature>
<feature type="non-consecutive residues" evidence="4">
    <location>
        <begin position="96"/>
        <end position="97"/>
    </location>
</feature>
<feature type="non-consecutive residues" evidence="4">
    <location>
        <begin position="304"/>
        <end position="305"/>
    </location>
</feature>
<feature type="non-consecutive residues" evidence="4">
    <location>
        <begin position="314"/>
        <end position="315"/>
    </location>
</feature>
<feature type="non-consecutive residues" evidence="4">
    <location>
        <begin position="360"/>
        <end position="361"/>
    </location>
</feature>
<feature type="non-consecutive residues" evidence="4">
    <location>
        <begin position="435"/>
        <end position="436"/>
    </location>
</feature>
<feature type="non-consecutive residues" evidence="4">
    <location>
        <begin position="615"/>
        <end position="616"/>
    </location>
</feature>
<feature type="non-consecutive residues" evidence="4">
    <location>
        <begin position="785"/>
        <end position="786"/>
    </location>
</feature>
<feature type="non-consecutive residues" evidence="4">
    <location>
        <begin position="797"/>
        <end position="798"/>
    </location>
</feature>
<feature type="non-consecutive residues" evidence="4">
    <location>
        <begin position="869"/>
        <end position="870"/>
    </location>
</feature>
<feature type="non-consecutive residues" evidence="4">
    <location>
        <begin position="879"/>
        <end position="880"/>
    </location>
</feature>
<feature type="non-terminal residue" evidence="4">
    <location>
        <position position="1"/>
    </location>
</feature>
<feature type="non-terminal residue" evidence="4">
    <location>
        <position position="933"/>
    </location>
</feature>
<name>CO1A2_GLYSX</name>
<dbReference type="GO" id="GO:0031012">
    <property type="term" value="C:extracellular matrix"/>
    <property type="evidence" value="ECO:0007669"/>
    <property type="project" value="TreeGrafter"/>
</dbReference>
<dbReference type="GO" id="GO:0005615">
    <property type="term" value="C:extracellular space"/>
    <property type="evidence" value="ECO:0007669"/>
    <property type="project" value="TreeGrafter"/>
</dbReference>
<dbReference type="GO" id="GO:0030020">
    <property type="term" value="F:extracellular matrix structural constituent conferring tensile strength"/>
    <property type="evidence" value="ECO:0007669"/>
    <property type="project" value="TreeGrafter"/>
</dbReference>
<dbReference type="GO" id="GO:0030198">
    <property type="term" value="P:extracellular matrix organization"/>
    <property type="evidence" value="ECO:0007669"/>
    <property type="project" value="TreeGrafter"/>
</dbReference>
<dbReference type="InterPro" id="IPR008160">
    <property type="entry name" value="Collagen"/>
</dbReference>
<dbReference type="InterPro" id="IPR050149">
    <property type="entry name" value="Collagen_superfamily"/>
</dbReference>
<dbReference type="PANTHER" id="PTHR24023:SF1112">
    <property type="entry name" value="COL_CUTICLE_N DOMAIN-CONTAINING PROTEIN-RELATED"/>
    <property type="match status" value="1"/>
</dbReference>
<dbReference type="PANTHER" id="PTHR24023">
    <property type="entry name" value="COLLAGEN ALPHA"/>
    <property type="match status" value="1"/>
</dbReference>
<dbReference type="Pfam" id="PF01391">
    <property type="entry name" value="Collagen"/>
    <property type="match status" value="6"/>
</dbReference>
<organism evidence="4">
    <name type="scientific">Glyptodon sp. (strain SLP-2019)</name>
    <name type="common">Giant armadillo</name>
    <dbReference type="NCBI Taxonomy" id="2546663"/>
    <lineage>
        <taxon>Eukaryota</taxon>
        <taxon>Metazoa</taxon>
        <taxon>Chordata</taxon>
        <taxon>Craniata</taxon>
        <taxon>Vertebrata</taxon>
        <taxon>Euteleostomi</taxon>
        <taxon>Mammalia</taxon>
        <taxon>Eutheria</taxon>
        <taxon>Xenarthra</taxon>
        <taxon>Cingulata</taxon>
        <taxon>Chlamyphoridae</taxon>
        <taxon>Glyptodon</taxon>
    </lineage>
</organism>
<evidence type="ECO:0000250" key="1">
    <source>
        <dbReference type="UniProtKB" id="P08123"/>
    </source>
</evidence>
<evidence type="ECO:0000256" key="2">
    <source>
        <dbReference type="SAM" id="MobiDB-lite"/>
    </source>
</evidence>
<evidence type="ECO:0000269" key="3">
    <source>
    </source>
</evidence>
<evidence type="ECO:0000303" key="4">
    <source>
    </source>
</evidence>
<evidence type="ECO:0000305" key="5"/>
<protein>
    <recommendedName>
        <fullName evidence="4">Collagen alpha-2(I) chain</fullName>
    </recommendedName>
    <alternativeName>
        <fullName evidence="1">Alpha-2 type I collagen</fullName>
    </alternativeName>
</protein>
<sequence length="933" mass="83328">SGGFDFGVGLGPGPMGLMGPRGPPGASGAPGPQGFQGPAGEPGEPGQTGPAGARPGKAGEDGHPGKPGRPGERGVVGPQGARGFPGTPGLPGFKGIGARGLPGERGRVGAPGPAGARGSDGSVGPVGPAGPIGSAGPPGFPGAPGPKGELGPVGNPGPAGPAGPRGEQGLPGVSGPVGPPGNPGANGLTGAKGAAGLPGVAGAPGLPGPRGIPGPVGAVGATGARGLVGEPGPAGSKGESGNKGEPGSAGPQGPPGPSGEEGKRGPNGESGSTGPTGPPGLRGGPGSRGLPGADGRAGVMGPAGRGASGPAGVRGRPGEPGLMGPRGLPGSPGNTGPAGKEGPVGLPGIDGRPGPVGPAGRGEAGNIGFPGPKGPTGDPGKAGEKGHAGLAGNRGAPGPDGNNGAQGPPGLQGVQGGKGEQGPAGPPGFQGLPGPGTTGEAGKPGERGIHGEFGLPGPAGPRGERGPPGESGAAGPVGPIGSRGPSGPPGPDGNKGEPGVVGAPGTAGPAGSGGLPGERGAAGIPGGKGEKGETGLRGEVGTTGRDGARGAPGAVGAPGPAGATGDRGEAGAAGPAGPAGPRGSPGERGEVGPAGPNGFAGPAGAAGQPGAKGERKGPKGENGIVGPTGPVGAAGPSGPNGAPGPAGGRGDGGPPGLTGFPGAAGRTGPPGPSGITGPPGPPGAAGKEGLRGPRGDQGPVGRTGETGAGGPPGFAGEKGPSGEPGTAGPPGTAGPQGLLGAPGILGLPGSRGERGLPGVAGAVGEPGPLGISGPPGARGPSGAVGPGVNGAPGEAGRDGLPGHKGERGYAGNAGPVGAAGAPGPHGSVGPAGKHGNRGEPGPAGSVGPVGAVGPRGPSGPQGVRGDKGEGDKGPRGLPGGLQGLPGLAGQHGDQGSPGPVGPAGPRGPAGPSGPAGKDGRTGHPGAVGPAGVR</sequence>